<name>RRC1_CAEBR</name>
<feature type="chain" id="PRO_0000370748" description="GTPase-activating protein rrc-1">
    <location>
        <begin position="1"/>
        <end position="752"/>
    </location>
</feature>
<feature type="domain" description="SH3" evidence="3">
    <location>
        <begin position="165"/>
        <end position="244"/>
    </location>
</feature>
<feature type="domain" description="Rho-GAP" evidence="2">
    <location>
        <begin position="281"/>
        <end position="463"/>
    </location>
</feature>
<feature type="region of interest" description="Disordered" evidence="4">
    <location>
        <begin position="523"/>
        <end position="552"/>
    </location>
</feature>
<feature type="region of interest" description="Disordered" evidence="4">
    <location>
        <begin position="582"/>
        <end position="609"/>
    </location>
</feature>
<feature type="site" description="Arginine finger; crucial for GTP hydrolysis by stabilizing the transition state" evidence="2">
    <location>
        <position position="316"/>
    </location>
</feature>
<sequence>MIDGVEESDAPLSPKSPFARRNGRSLRIQRLVDCQHFHYTTVELGPVKVVIIAINTDENATERIKMRVESESNSWLVERSREDWAVFDRQLHRCVFERRHSRLDELFPLIHLESAKFEEVLVKYTERLSELTGSIITCYPVLKFLEIDSRGGHFEPAEETSINVPAIAAAVVTKDFEPTDNSQLRLRVGDIVSITEMSTASPNEQTFWKAKLTISNQKIVDPQNGHLGFEIGYFPRDCVMLIDDKRLPNPLNTEPKPAPRNARRYMTTMFRNRRREPIFGLELTELFMRTGKRVPVIVERCCAAIEDQGIVTGIYRQCGIQSNIQRLRAKFDSGAEPDLHEFGQRDIYSVSSLLKQYFRQLPNPLFTYQAYPALIETFEKEESVEEKVESLRFLLEAMPEHLSRLCKSKSLTDMTSKNLAIVWSPNLFRPPPTLNGADAHLLSGLNVHTAICDFCIENSDSLFICDIDEEQSKCTSIENSFTTISKSATMSDMRSESDSRWPRFFRGKSVEGFWKFNRKQQTSTGELCGSPPSEVKWRSRSTRSHSTDATFQSSRADSFMQLMHTGMDQIREGMRIFRARARSMRPTSRPPPSPRTRRARFSNGGGANNVQRVNERERDIQIELPLATAESSITPEPRSTMDSNNIMTRTVSVNDSDDASFEENGLKEIRERKVMFKAATQEHVAPIHERSSPVEEWSSDSRESLHLEMSRYDNVSPSGTITRSQREPISNLSPAAQLLFFESSRASQLFSA</sequence>
<dbReference type="EMBL" id="HE601451">
    <property type="protein sequence ID" value="CAP23100.2"/>
    <property type="molecule type" value="Genomic_DNA"/>
</dbReference>
<dbReference type="SMR" id="A8WRJ2"/>
<dbReference type="STRING" id="6238.A8WRJ2"/>
<dbReference type="WormBase" id="CBG01901a">
    <property type="protein sequence ID" value="CBP38656"/>
    <property type="gene ID" value="WBGene00025070"/>
    <property type="gene designation" value="Cbr-rrc-1"/>
</dbReference>
<dbReference type="eggNOG" id="KOG1449">
    <property type="taxonomic scope" value="Eukaryota"/>
</dbReference>
<dbReference type="HOGENOM" id="CLU_021271_0_0_1"/>
<dbReference type="InParanoid" id="A8WRJ2"/>
<dbReference type="OMA" id="MFRNRRR"/>
<dbReference type="Proteomes" id="UP000008549">
    <property type="component" value="Unassembled WGS sequence"/>
</dbReference>
<dbReference type="GO" id="GO:0005096">
    <property type="term" value="F:GTPase activator activity"/>
    <property type="evidence" value="ECO:0000250"/>
    <property type="project" value="UniProtKB"/>
</dbReference>
<dbReference type="GO" id="GO:0043547">
    <property type="term" value="P:positive regulation of GTPase activity"/>
    <property type="evidence" value="ECO:0000250"/>
    <property type="project" value="UniProtKB"/>
</dbReference>
<dbReference type="GO" id="GO:0007165">
    <property type="term" value="P:signal transduction"/>
    <property type="evidence" value="ECO:0007669"/>
    <property type="project" value="InterPro"/>
</dbReference>
<dbReference type="FunFam" id="1.10.555.10:FF:000140">
    <property type="entry name" value="GTPase-activating protein rrc-1"/>
    <property type="match status" value="1"/>
</dbReference>
<dbReference type="FunFam" id="2.30.30.40:FF:000346">
    <property type="entry name" value="GTPase-activating protein rrc-1"/>
    <property type="match status" value="1"/>
</dbReference>
<dbReference type="Gene3D" id="1.10.555.10">
    <property type="entry name" value="Rho GTPase activation protein"/>
    <property type="match status" value="1"/>
</dbReference>
<dbReference type="Gene3D" id="2.30.30.40">
    <property type="entry name" value="SH3 Domains"/>
    <property type="match status" value="1"/>
</dbReference>
<dbReference type="InterPro" id="IPR051576">
    <property type="entry name" value="PX-Rho_GAP"/>
</dbReference>
<dbReference type="InterPro" id="IPR008936">
    <property type="entry name" value="Rho_GTPase_activation_prot"/>
</dbReference>
<dbReference type="InterPro" id="IPR000198">
    <property type="entry name" value="RhoGAP_dom"/>
</dbReference>
<dbReference type="InterPro" id="IPR036028">
    <property type="entry name" value="SH3-like_dom_sf"/>
</dbReference>
<dbReference type="InterPro" id="IPR001452">
    <property type="entry name" value="SH3_domain"/>
</dbReference>
<dbReference type="PANTHER" id="PTHR15729">
    <property type="entry name" value="CDC42 GTPASE-ACTIVATING PROTEIN"/>
    <property type="match status" value="1"/>
</dbReference>
<dbReference type="PANTHER" id="PTHR15729:SF10">
    <property type="entry name" value="GTPASE-ACTIVATING PROTEIN CDGAPR"/>
    <property type="match status" value="1"/>
</dbReference>
<dbReference type="Pfam" id="PF00620">
    <property type="entry name" value="RhoGAP"/>
    <property type="match status" value="1"/>
</dbReference>
<dbReference type="Pfam" id="PF07653">
    <property type="entry name" value="SH3_2"/>
    <property type="match status" value="1"/>
</dbReference>
<dbReference type="SMART" id="SM00324">
    <property type="entry name" value="RhoGAP"/>
    <property type="match status" value="1"/>
</dbReference>
<dbReference type="SMART" id="SM00326">
    <property type="entry name" value="SH3"/>
    <property type="match status" value="1"/>
</dbReference>
<dbReference type="SUPFAM" id="SSF48350">
    <property type="entry name" value="GTPase activation domain, GAP"/>
    <property type="match status" value="1"/>
</dbReference>
<dbReference type="SUPFAM" id="SSF50044">
    <property type="entry name" value="SH3-domain"/>
    <property type="match status" value="1"/>
</dbReference>
<dbReference type="PROSITE" id="PS50238">
    <property type="entry name" value="RHOGAP"/>
    <property type="match status" value="1"/>
</dbReference>
<dbReference type="PROSITE" id="PS50002">
    <property type="entry name" value="SH3"/>
    <property type="match status" value="1"/>
</dbReference>
<accession>A8WRJ2</accession>
<evidence type="ECO:0000250" key="1">
    <source>
        <dbReference type="UniProtKB" id="Q20498"/>
    </source>
</evidence>
<evidence type="ECO:0000255" key="2">
    <source>
        <dbReference type="PROSITE-ProRule" id="PRU00172"/>
    </source>
</evidence>
<evidence type="ECO:0000255" key="3">
    <source>
        <dbReference type="PROSITE-ProRule" id="PRU00192"/>
    </source>
</evidence>
<evidence type="ECO:0000256" key="4">
    <source>
        <dbReference type="SAM" id="MobiDB-lite"/>
    </source>
</evidence>
<evidence type="ECO:0000312" key="5">
    <source>
        <dbReference type="EMBL" id="CAP23100.2"/>
    </source>
</evidence>
<keyword id="KW-0343">GTPase activation</keyword>
<keyword id="KW-1185">Reference proteome</keyword>
<keyword id="KW-0728">SH3 domain</keyword>
<proteinExistence type="inferred from homology"/>
<protein>
    <recommendedName>
        <fullName evidence="1">GTPase-activating protein rrc-1</fullName>
    </recommendedName>
    <alternativeName>
        <fullName evidence="1">RhoGAP for Rac-1 and Cdc-42</fullName>
    </alternativeName>
</protein>
<reference evidence="5" key="1">
    <citation type="journal article" date="2003" name="PLoS Biol.">
        <title>The genome sequence of Caenorhabditis briggsae: a platform for comparative genomics.</title>
        <authorList>
            <person name="Stein L.D."/>
            <person name="Bao Z."/>
            <person name="Blasiar D."/>
            <person name="Blumenthal T."/>
            <person name="Brent M.R."/>
            <person name="Chen N."/>
            <person name="Chinwalla A."/>
            <person name="Clarke L."/>
            <person name="Clee C."/>
            <person name="Coghlan A."/>
            <person name="Coulson A."/>
            <person name="D'Eustachio P."/>
            <person name="Fitch D.H.A."/>
            <person name="Fulton L.A."/>
            <person name="Fulton R.E."/>
            <person name="Griffiths-Jones S."/>
            <person name="Harris T.W."/>
            <person name="Hillier L.W."/>
            <person name="Kamath R."/>
            <person name="Kuwabara P.E."/>
            <person name="Mardis E.R."/>
            <person name="Marra M.A."/>
            <person name="Miner T.L."/>
            <person name="Minx P."/>
            <person name="Mullikin J.C."/>
            <person name="Plumb R.W."/>
            <person name="Rogers J."/>
            <person name="Schein J.E."/>
            <person name="Sohrmann M."/>
            <person name="Spieth J."/>
            <person name="Stajich J.E."/>
            <person name="Wei C."/>
            <person name="Willey D."/>
            <person name="Wilson R.K."/>
            <person name="Durbin R.M."/>
            <person name="Waterston R.H."/>
        </authorList>
    </citation>
    <scope>NUCLEOTIDE SEQUENCE [LARGE SCALE GENOMIC DNA]</scope>
    <source>
        <strain evidence="5">AF16</strain>
    </source>
</reference>
<gene>
    <name evidence="5" type="primary">rrc-1</name>
    <name type="ORF">CBG01901</name>
</gene>
<comment type="function">
    <text evidence="1">Functions as a GTPase-activating protein (GAP) for ced-10/RAC-1 and CDC42.</text>
</comment>
<organism>
    <name type="scientific">Caenorhabditis briggsae</name>
    <dbReference type="NCBI Taxonomy" id="6238"/>
    <lineage>
        <taxon>Eukaryota</taxon>
        <taxon>Metazoa</taxon>
        <taxon>Ecdysozoa</taxon>
        <taxon>Nematoda</taxon>
        <taxon>Chromadorea</taxon>
        <taxon>Rhabditida</taxon>
        <taxon>Rhabditina</taxon>
        <taxon>Rhabditomorpha</taxon>
        <taxon>Rhabditoidea</taxon>
        <taxon>Rhabditidae</taxon>
        <taxon>Peloderinae</taxon>
        <taxon>Caenorhabditis</taxon>
    </lineage>
</organism>